<organism>
    <name type="scientific">Chlamydia felis (strain Fe/C-56)</name>
    <name type="common">Chlamydophila felis</name>
    <dbReference type="NCBI Taxonomy" id="264202"/>
    <lineage>
        <taxon>Bacteria</taxon>
        <taxon>Pseudomonadati</taxon>
        <taxon>Chlamydiota</taxon>
        <taxon>Chlamydiia</taxon>
        <taxon>Chlamydiales</taxon>
        <taxon>Chlamydiaceae</taxon>
        <taxon>Chlamydia/Chlamydophila group</taxon>
        <taxon>Chlamydia</taxon>
    </lineage>
</organism>
<dbReference type="EMBL" id="AP006861">
    <property type="protein sequence ID" value="BAE81589.1"/>
    <property type="molecule type" value="Genomic_DNA"/>
</dbReference>
<dbReference type="RefSeq" id="WP_006342868.1">
    <property type="nucleotide sequence ID" value="NC_007899.1"/>
</dbReference>
<dbReference type="SMR" id="Q253E9"/>
<dbReference type="STRING" id="264202.CF0817"/>
<dbReference type="GeneID" id="93024742"/>
<dbReference type="KEGG" id="cfe:CF0817"/>
<dbReference type="eggNOG" id="COG0048">
    <property type="taxonomic scope" value="Bacteria"/>
</dbReference>
<dbReference type="HOGENOM" id="CLU_104295_1_2_0"/>
<dbReference type="OrthoDB" id="9802366at2"/>
<dbReference type="Proteomes" id="UP000001260">
    <property type="component" value="Chromosome"/>
</dbReference>
<dbReference type="GO" id="GO:0015935">
    <property type="term" value="C:small ribosomal subunit"/>
    <property type="evidence" value="ECO:0007669"/>
    <property type="project" value="InterPro"/>
</dbReference>
<dbReference type="GO" id="GO:0019843">
    <property type="term" value="F:rRNA binding"/>
    <property type="evidence" value="ECO:0007669"/>
    <property type="project" value="UniProtKB-UniRule"/>
</dbReference>
<dbReference type="GO" id="GO:0003735">
    <property type="term" value="F:structural constituent of ribosome"/>
    <property type="evidence" value="ECO:0007669"/>
    <property type="project" value="InterPro"/>
</dbReference>
<dbReference type="GO" id="GO:0000049">
    <property type="term" value="F:tRNA binding"/>
    <property type="evidence" value="ECO:0007669"/>
    <property type="project" value="UniProtKB-UniRule"/>
</dbReference>
<dbReference type="GO" id="GO:0006412">
    <property type="term" value="P:translation"/>
    <property type="evidence" value="ECO:0007669"/>
    <property type="project" value="UniProtKB-UniRule"/>
</dbReference>
<dbReference type="CDD" id="cd03368">
    <property type="entry name" value="Ribosomal_S12"/>
    <property type="match status" value="1"/>
</dbReference>
<dbReference type="FunFam" id="2.40.50.140:FF:000001">
    <property type="entry name" value="30S ribosomal protein S12"/>
    <property type="match status" value="1"/>
</dbReference>
<dbReference type="Gene3D" id="2.40.50.140">
    <property type="entry name" value="Nucleic acid-binding proteins"/>
    <property type="match status" value="1"/>
</dbReference>
<dbReference type="HAMAP" id="MF_00403_B">
    <property type="entry name" value="Ribosomal_uS12_B"/>
    <property type="match status" value="1"/>
</dbReference>
<dbReference type="InterPro" id="IPR012340">
    <property type="entry name" value="NA-bd_OB-fold"/>
</dbReference>
<dbReference type="InterPro" id="IPR006032">
    <property type="entry name" value="Ribosomal_uS12"/>
</dbReference>
<dbReference type="InterPro" id="IPR005679">
    <property type="entry name" value="Ribosomal_uS12_bac"/>
</dbReference>
<dbReference type="NCBIfam" id="TIGR00981">
    <property type="entry name" value="rpsL_bact"/>
    <property type="match status" value="1"/>
</dbReference>
<dbReference type="PANTHER" id="PTHR11652">
    <property type="entry name" value="30S RIBOSOMAL PROTEIN S12 FAMILY MEMBER"/>
    <property type="match status" value="1"/>
</dbReference>
<dbReference type="Pfam" id="PF00164">
    <property type="entry name" value="Ribosom_S12_S23"/>
    <property type="match status" value="1"/>
</dbReference>
<dbReference type="PIRSF" id="PIRSF002133">
    <property type="entry name" value="Ribosomal_S12/S23"/>
    <property type="match status" value="1"/>
</dbReference>
<dbReference type="PRINTS" id="PR01034">
    <property type="entry name" value="RIBOSOMALS12"/>
</dbReference>
<dbReference type="SUPFAM" id="SSF50249">
    <property type="entry name" value="Nucleic acid-binding proteins"/>
    <property type="match status" value="1"/>
</dbReference>
<dbReference type="PROSITE" id="PS00055">
    <property type="entry name" value="RIBOSOMAL_S12"/>
    <property type="match status" value="1"/>
</dbReference>
<evidence type="ECO:0000250" key="1"/>
<evidence type="ECO:0000255" key="2">
    <source>
        <dbReference type="HAMAP-Rule" id="MF_00403"/>
    </source>
</evidence>
<evidence type="ECO:0000256" key="3">
    <source>
        <dbReference type="SAM" id="MobiDB-lite"/>
    </source>
</evidence>
<evidence type="ECO:0000305" key="4"/>
<gene>
    <name evidence="2" type="primary">rpsL</name>
    <name type="ordered locus">CF0817</name>
</gene>
<keyword id="KW-0488">Methylation</keyword>
<keyword id="KW-0687">Ribonucleoprotein</keyword>
<keyword id="KW-0689">Ribosomal protein</keyword>
<keyword id="KW-0694">RNA-binding</keyword>
<keyword id="KW-0699">rRNA-binding</keyword>
<keyword id="KW-0820">tRNA-binding</keyword>
<feature type="chain" id="PRO_0000263547" description="Small ribosomal subunit protein uS12">
    <location>
        <begin position="1"/>
        <end position="123"/>
    </location>
</feature>
<feature type="region of interest" description="Disordered" evidence="3">
    <location>
        <begin position="1"/>
        <end position="29"/>
    </location>
</feature>
<feature type="compositionally biased region" description="Basic residues" evidence="3">
    <location>
        <begin position="8"/>
        <end position="21"/>
    </location>
</feature>
<feature type="modified residue" description="3-methylthioaspartic acid" evidence="1">
    <location>
        <position position="89"/>
    </location>
</feature>
<accession>Q253E9</accession>
<protein>
    <recommendedName>
        <fullName evidence="2">Small ribosomal subunit protein uS12</fullName>
    </recommendedName>
    <alternativeName>
        <fullName evidence="4">30S ribosomal protein S12</fullName>
    </alternativeName>
</protein>
<reference key="1">
    <citation type="journal article" date="2006" name="DNA Res.">
        <title>Genome sequence of the cat pathogen, Chlamydophila felis.</title>
        <authorList>
            <person name="Azuma Y."/>
            <person name="Hirakawa H."/>
            <person name="Yamashita A."/>
            <person name="Cai Y."/>
            <person name="Rahman M.A."/>
            <person name="Suzuki H."/>
            <person name="Mitaku S."/>
            <person name="Toh H."/>
            <person name="Goto S."/>
            <person name="Murakami T."/>
            <person name="Sugi K."/>
            <person name="Hayashi H."/>
            <person name="Fukushi H."/>
            <person name="Hattori M."/>
            <person name="Kuhara S."/>
            <person name="Shirai M."/>
        </authorList>
    </citation>
    <scope>NUCLEOTIDE SEQUENCE [LARGE SCALE GENOMIC DNA]</scope>
    <source>
        <strain>Fe/C-56</strain>
    </source>
</reference>
<sequence>MPTINQLIRKKRQSSASRKKSPALQKCPQRRGVCLQVKTKTPKKPNSALRKVAWVRLSNGQEVIAYIGGEGHNLQEHSIVLVQGGRVKDLPGVRYHIVRGALDCAAVKNRKQSRSRYGAKRPK</sequence>
<proteinExistence type="inferred from homology"/>
<name>RS12_CHLFF</name>
<comment type="function">
    <text evidence="2">With S4 and S5 plays an important role in translational accuracy.</text>
</comment>
<comment type="function">
    <text evidence="2">Interacts with and stabilizes bases of the 16S rRNA that are involved in tRNA selection in the A site and with the mRNA backbone. Located at the interface of the 30S and 50S subunits, it traverses the body of the 30S subunit contacting proteins on the other side and probably holding the rRNA structure together. The combined cluster of proteins S8, S12 and S17 appears to hold together the shoulder and platform of the 30S subunit.</text>
</comment>
<comment type="subunit">
    <text evidence="2">Part of the 30S ribosomal subunit. Contacts proteins S8 and S17. May interact with IF1 in the 30S initiation complex.</text>
</comment>
<comment type="similarity">
    <text evidence="2">Belongs to the universal ribosomal protein uS12 family.</text>
</comment>